<evidence type="ECO:0000250" key="1">
    <source>
        <dbReference type="UniProtKB" id="P33644"/>
    </source>
</evidence>
<evidence type="ECO:0000250" key="2">
    <source>
        <dbReference type="UniProtKB" id="P84138"/>
    </source>
</evidence>
<evidence type="ECO:0000250" key="3">
    <source>
        <dbReference type="UniProtKB" id="Q1EIR0"/>
    </source>
</evidence>
<evidence type="ECO:0000305" key="4"/>
<sequence>MEGLINGSVYYKIFDKTFNNSSHRYIKKNNSINETEIVENKKSITTYFKAQDILILNQVHGNQIVNADESIIAVPEADGSITTKKNLILAVQSADCVPVLLASGDGKIIGAAHAGWKGSINNIISNIVTKITEKGAKNLIAVIGPAIAQSSYEVDDEYYKAFLSKDINNKQFFIHSIKENHYMFDLPAFVELKLKEAGVKDIKNIAEDTYTNPLKYPSKRRSYHLQEPYNQNILSAIVMK</sequence>
<organism>
    <name type="scientific">Rickettsia conorii (strain ATCC VR-613 / Malish 7)</name>
    <dbReference type="NCBI Taxonomy" id="272944"/>
    <lineage>
        <taxon>Bacteria</taxon>
        <taxon>Pseudomonadati</taxon>
        <taxon>Pseudomonadota</taxon>
        <taxon>Alphaproteobacteria</taxon>
        <taxon>Rickettsiales</taxon>
        <taxon>Rickettsiaceae</taxon>
        <taxon>Rickettsieae</taxon>
        <taxon>Rickettsia</taxon>
        <taxon>spotted fever group</taxon>
    </lineage>
</organism>
<feature type="chain" id="PRO_0000163169" description="Purine nucleoside phosphorylase RC0672">
    <location>
        <begin position="1"/>
        <end position="240"/>
    </location>
</feature>
<feature type="binding site" evidence="2">
    <location>
        <position position="60"/>
    </location>
    <ligand>
        <name>Zn(2+)</name>
        <dbReference type="ChEBI" id="CHEBI:29105"/>
        <note>catalytic</note>
    </ligand>
</feature>
<feature type="binding site" evidence="2">
    <location>
        <position position="96"/>
    </location>
    <ligand>
        <name>Zn(2+)</name>
        <dbReference type="ChEBI" id="CHEBI:29105"/>
        <note>catalytic</note>
    </ligand>
</feature>
<feature type="binding site" evidence="2">
    <location>
        <position position="113"/>
    </location>
    <ligand>
        <name>Zn(2+)</name>
        <dbReference type="ChEBI" id="CHEBI:29105"/>
        <note>catalytic</note>
    </ligand>
</feature>
<protein>
    <recommendedName>
        <fullName>Purine nucleoside phosphorylase RC0672</fullName>
        <ecNumber evidence="2">2.4.2.1</ecNumber>
    </recommendedName>
    <alternativeName>
        <fullName>Adenosine deaminase RC0672</fullName>
        <ecNumber evidence="2">3.5.4.4</ecNumber>
    </alternativeName>
    <alternativeName>
        <fullName>S-methyl-5'-thioadenosine phosphorylase RC0672</fullName>
        <ecNumber evidence="2">2.4.2.28</ecNumber>
    </alternativeName>
</protein>
<dbReference type="EC" id="2.4.2.1" evidence="2"/>
<dbReference type="EC" id="3.5.4.4" evidence="2"/>
<dbReference type="EC" id="2.4.2.28" evidence="2"/>
<dbReference type="EMBL" id="AE006914">
    <property type="protein sequence ID" value="AAL03210.1"/>
    <property type="molecule type" value="Genomic_DNA"/>
</dbReference>
<dbReference type="PIR" id="H97783">
    <property type="entry name" value="H97783"/>
</dbReference>
<dbReference type="SMR" id="Q92HU9"/>
<dbReference type="GeneID" id="927761"/>
<dbReference type="KEGG" id="rco:RC0672"/>
<dbReference type="PATRIC" id="fig|272944.4.peg.764"/>
<dbReference type="HOGENOM" id="CLU_065784_2_0_5"/>
<dbReference type="Proteomes" id="UP000000816">
    <property type="component" value="Chromosome"/>
</dbReference>
<dbReference type="GO" id="GO:0004000">
    <property type="term" value="F:adenosine deaminase activity"/>
    <property type="evidence" value="ECO:0007669"/>
    <property type="project" value="RHEA"/>
</dbReference>
<dbReference type="GO" id="GO:0005507">
    <property type="term" value="F:copper ion binding"/>
    <property type="evidence" value="ECO:0007669"/>
    <property type="project" value="TreeGrafter"/>
</dbReference>
<dbReference type="GO" id="GO:0016491">
    <property type="term" value="F:oxidoreductase activity"/>
    <property type="evidence" value="ECO:0007669"/>
    <property type="project" value="UniProtKB-KW"/>
</dbReference>
<dbReference type="GO" id="GO:0017061">
    <property type="term" value="F:S-methyl-5-thioadenosine phosphorylase activity"/>
    <property type="evidence" value="ECO:0007669"/>
    <property type="project" value="UniProtKB-EC"/>
</dbReference>
<dbReference type="CDD" id="cd16833">
    <property type="entry name" value="YfiH"/>
    <property type="match status" value="1"/>
</dbReference>
<dbReference type="Gene3D" id="3.60.140.10">
    <property type="entry name" value="CNF1/YfiH-like putative cysteine hydrolases"/>
    <property type="match status" value="1"/>
</dbReference>
<dbReference type="InterPro" id="IPR003730">
    <property type="entry name" value="Cu_polyphenol_OxRdtase"/>
</dbReference>
<dbReference type="InterPro" id="IPR038371">
    <property type="entry name" value="Cu_polyphenol_OxRdtase_sf"/>
</dbReference>
<dbReference type="InterPro" id="IPR011324">
    <property type="entry name" value="Cytotoxic_necrot_fac-like_cat"/>
</dbReference>
<dbReference type="NCBIfam" id="TIGR00726">
    <property type="entry name" value="peptidoglycan editing factor PgeF"/>
    <property type="match status" value="1"/>
</dbReference>
<dbReference type="PANTHER" id="PTHR30616:SF2">
    <property type="entry name" value="PURINE NUCLEOSIDE PHOSPHORYLASE LACC1"/>
    <property type="match status" value="1"/>
</dbReference>
<dbReference type="PANTHER" id="PTHR30616">
    <property type="entry name" value="UNCHARACTERIZED PROTEIN YFIH"/>
    <property type="match status" value="1"/>
</dbReference>
<dbReference type="Pfam" id="PF02578">
    <property type="entry name" value="Cu-oxidase_4"/>
    <property type="match status" value="1"/>
</dbReference>
<dbReference type="SUPFAM" id="SSF64438">
    <property type="entry name" value="CNF1/YfiH-like putative cysteine hydrolases"/>
    <property type="match status" value="1"/>
</dbReference>
<reference key="1">
    <citation type="journal article" date="2001" name="Science">
        <title>Mechanisms of evolution in Rickettsia conorii and R. prowazekii.</title>
        <authorList>
            <person name="Ogata H."/>
            <person name="Audic S."/>
            <person name="Renesto-Audiffren P."/>
            <person name="Fournier P.-E."/>
            <person name="Barbe V."/>
            <person name="Samson D."/>
            <person name="Roux V."/>
            <person name="Cossart P."/>
            <person name="Weissenbach J."/>
            <person name="Claverie J.-M."/>
            <person name="Raoult D."/>
        </authorList>
    </citation>
    <scope>NUCLEOTIDE SEQUENCE [LARGE SCALE GENOMIC DNA]</scope>
    <source>
        <strain>ATCC VR-613 / Malish 7</strain>
    </source>
</reference>
<accession>Q92HU9</accession>
<keyword id="KW-0186">Copper</keyword>
<keyword id="KW-0378">Hydrolase</keyword>
<keyword id="KW-0479">Metal-binding</keyword>
<keyword id="KW-0560">Oxidoreductase</keyword>
<keyword id="KW-0808">Transferase</keyword>
<keyword id="KW-0862">Zinc</keyword>
<name>PURNU_RICCN</name>
<gene>
    <name type="ordered locus">RC0672</name>
</gene>
<comment type="function">
    <text evidence="2">Purine nucleoside enzyme that catalyzes the phosphorolysis of adenosine and inosine nucleosides, yielding D-ribose 1-phosphate and the respective free bases, adenine and hypoxanthine. Also catalyzes the phosphorolysis of S-methyl-5'-thioadenosine into adenine and S-methyl-5-thio-alpha-D-ribose 1-phosphate. Also has adenosine deaminase activity.</text>
</comment>
<comment type="catalytic activity">
    <reaction evidence="2">
        <text>adenosine + phosphate = alpha-D-ribose 1-phosphate + adenine</text>
        <dbReference type="Rhea" id="RHEA:27642"/>
        <dbReference type="ChEBI" id="CHEBI:16335"/>
        <dbReference type="ChEBI" id="CHEBI:16708"/>
        <dbReference type="ChEBI" id="CHEBI:43474"/>
        <dbReference type="ChEBI" id="CHEBI:57720"/>
        <dbReference type="EC" id="2.4.2.1"/>
    </reaction>
    <physiologicalReaction direction="left-to-right" evidence="2">
        <dbReference type="Rhea" id="RHEA:27643"/>
    </physiologicalReaction>
</comment>
<comment type="catalytic activity">
    <reaction evidence="2">
        <text>S-methyl-5'-thioadenosine + phosphate = 5-(methylsulfanyl)-alpha-D-ribose 1-phosphate + adenine</text>
        <dbReference type="Rhea" id="RHEA:11852"/>
        <dbReference type="ChEBI" id="CHEBI:16708"/>
        <dbReference type="ChEBI" id="CHEBI:17509"/>
        <dbReference type="ChEBI" id="CHEBI:43474"/>
        <dbReference type="ChEBI" id="CHEBI:58533"/>
        <dbReference type="EC" id="2.4.2.28"/>
    </reaction>
    <physiologicalReaction direction="left-to-right" evidence="2">
        <dbReference type="Rhea" id="RHEA:11853"/>
    </physiologicalReaction>
</comment>
<comment type="catalytic activity">
    <reaction evidence="2">
        <text>inosine + phosphate = alpha-D-ribose 1-phosphate + hypoxanthine</text>
        <dbReference type="Rhea" id="RHEA:27646"/>
        <dbReference type="ChEBI" id="CHEBI:17368"/>
        <dbReference type="ChEBI" id="CHEBI:17596"/>
        <dbReference type="ChEBI" id="CHEBI:43474"/>
        <dbReference type="ChEBI" id="CHEBI:57720"/>
        <dbReference type="EC" id="2.4.2.1"/>
    </reaction>
    <physiologicalReaction direction="left-to-right" evidence="2">
        <dbReference type="Rhea" id="RHEA:27647"/>
    </physiologicalReaction>
</comment>
<comment type="catalytic activity">
    <reaction evidence="2">
        <text>adenosine + H2O + H(+) = inosine + NH4(+)</text>
        <dbReference type="Rhea" id="RHEA:24408"/>
        <dbReference type="ChEBI" id="CHEBI:15377"/>
        <dbReference type="ChEBI" id="CHEBI:15378"/>
        <dbReference type="ChEBI" id="CHEBI:16335"/>
        <dbReference type="ChEBI" id="CHEBI:17596"/>
        <dbReference type="ChEBI" id="CHEBI:28938"/>
        <dbReference type="EC" id="3.5.4.4"/>
    </reaction>
    <physiologicalReaction direction="left-to-right" evidence="2">
        <dbReference type="Rhea" id="RHEA:24409"/>
    </physiologicalReaction>
</comment>
<comment type="cofactor">
    <cofactor evidence="1">
        <name>Cu(2+)</name>
        <dbReference type="ChEBI" id="CHEBI:29036"/>
    </cofactor>
    <cofactor evidence="2">
        <name>Zn(2+)</name>
        <dbReference type="ChEBI" id="CHEBI:29105"/>
    </cofactor>
</comment>
<comment type="subunit">
    <text evidence="3">Homodimer.</text>
</comment>
<comment type="similarity">
    <text evidence="4">Belongs to the purine nucleoside phosphorylase YfiH/LACC1 family.</text>
</comment>
<proteinExistence type="inferred from homology"/>